<comment type="function">
    <text evidence="1">Catalytic subunit of the V1 complex of vacuolar(H+)-ATPase (V-ATPase), a multisubunit enzyme composed of a peripheral complex (V1) that hydrolyzes ATP and a membrane integral complex (V0) that translocates protons (By similarity). V-ATPase is responsible for acidifying and maintaining the pH of intracellular compartments (By similarity).</text>
</comment>
<comment type="catalytic activity">
    <reaction evidence="1">
        <text>ATP + H2O + 4 H(+)(in) = ADP + phosphate + 5 H(+)(out)</text>
        <dbReference type="Rhea" id="RHEA:57720"/>
        <dbReference type="ChEBI" id="CHEBI:15377"/>
        <dbReference type="ChEBI" id="CHEBI:15378"/>
        <dbReference type="ChEBI" id="CHEBI:30616"/>
        <dbReference type="ChEBI" id="CHEBI:43474"/>
        <dbReference type="ChEBI" id="CHEBI:456216"/>
        <dbReference type="EC" id="7.1.2.2"/>
    </reaction>
</comment>
<comment type="subunit">
    <text evidence="1">V-ATPase is a heteromultimeric enzyme composed of a peripheral catalytic V1 complex (components A to H) attached to an integral membrane V0 proton pore complex (components: a, c, c', c'', d, e, f and VOA1).</text>
</comment>
<comment type="subcellular location">
    <subcellularLocation>
        <location evidence="1">Vacuole membrane</location>
        <topology evidence="1">Peripheral membrane protein</topology>
        <orientation evidence="1">Cytoplasmic side</orientation>
    </subcellularLocation>
</comment>
<comment type="developmental stage">
    <text evidence="3">Expressed in late sporogonial stages.</text>
</comment>
<comment type="similarity">
    <text evidence="4">Belongs to the ATPase alpha/beta chains family.</text>
</comment>
<protein>
    <recommendedName>
        <fullName>V-type proton ATPase catalytic subunit A</fullName>
        <shortName>V-ATPase subunit A</shortName>
        <ecNumber evidence="1">7.1.2.2</ecNumber>
    </recommendedName>
    <alternativeName>
        <fullName>Vacuolar proton pump subunit alpha</fullName>
    </alternativeName>
</protein>
<name>VATA_ENCCU</name>
<reference key="1">
    <citation type="journal article" date="2001" name="Nature">
        <title>Genome sequence and gene compaction of the eukaryote parasite Encephalitozoon cuniculi.</title>
        <authorList>
            <person name="Katinka M.D."/>
            <person name="Duprat S."/>
            <person name="Cornillot E."/>
            <person name="Metenier G."/>
            <person name="Thomarat F."/>
            <person name="Prensier G."/>
            <person name="Barbe V."/>
            <person name="Peyretaillade E."/>
            <person name="Brottier P."/>
            <person name="Wincker P."/>
            <person name="Delbac F."/>
            <person name="El Alaoui H."/>
            <person name="Peyret P."/>
            <person name="Saurin W."/>
            <person name="Gouy M."/>
            <person name="Weissenbach J."/>
            <person name="Vivares C.P."/>
        </authorList>
    </citation>
    <scope>NUCLEOTIDE SEQUENCE [LARGE SCALE GENOMIC DNA]</scope>
    <source>
        <strain>GB-M1</strain>
    </source>
</reference>
<reference key="2">
    <citation type="journal article" date="2006" name="Proteomics">
        <title>Proteomic analysis of the eukaryotic parasite Encephalitozoon cuniculi (microsporidia): a reference map for proteins expressed in late sporogonial stages.</title>
        <authorList>
            <person name="Brosson D."/>
            <person name="Kuhn L."/>
            <person name="Delbac F."/>
            <person name="Garin J."/>
            <person name="Vivares C.P."/>
            <person name="Texier C."/>
        </authorList>
    </citation>
    <scope>IDENTIFICATION BY MASS SPECTROMETRY [LARGE SCALE ANALYSIS]</scope>
    <scope>DEVELOPMENTAL STAGE</scope>
</reference>
<keyword id="KW-0067">ATP-binding</keyword>
<keyword id="KW-0375">Hydrogen ion transport</keyword>
<keyword id="KW-0406">Ion transport</keyword>
<keyword id="KW-0472">Membrane</keyword>
<keyword id="KW-0547">Nucleotide-binding</keyword>
<keyword id="KW-1185">Reference proteome</keyword>
<keyword id="KW-1278">Translocase</keyword>
<keyword id="KW-0813">Transport</keyword>
<keyword id="KW-0926">Vacuole</keyword>
<proteinExistence type="evidence at protein level"/>
<evidence type="ECO:0000250" key="1">
    <source>
        <dbReference type="UniProtKB" id="P17255"/>
    </source>
</evidence>
<evidence type="ECO:0000255" key="2">
    <source>
        <dbReference type="PROSITE-ProRule" id="PRU00499"/>
    </source>
</evidence>
<evidence type="ECO:0000269" key="3">
    <source>
    </source>
</evidence>
<evidence type="ECO:0000305" key="4"/>
<gene>
    <name type="primary">VMA1</name>
    <name type="ordered locus">ECU11_1280i</name>
</gene>
<organism>
    <name type="scientific">Encephalitozoon cuniculi (strain GB-M1)</name>
    <name type="common">Microsporidian parasite</name>
    <dbReference type="NCBI Taxonomy" id="284813"/>
    <lineage>
        <taxon>Eukaryota</taxon>
        <taxon>Fungi</taxon>
        <taxon>Fungi incertae sedis</taxon>
        <taxon>Microsporidia</taxon>
        <taxon>Unikaryonidae</taxon>
        <taxon>Encephalitozoon</taxon>
    </lineage>
</organism>
<feature type="chain" id="PRO_0000382909" description="V-type proton ATPase catalytic subunit A">
    <location>
        <begin position="1"/>
        <end position="607"/>
    </location>
</feature>
<feature type="binding site" evidence="2">
    <location>
        <begin position="251"/>
        <end position="258"/>
    </location>
    <ligand>
        <name>ATP</name>
        <dbReference type="ChEBI" id="CHEBI:30616"/>
    </ligand>
</feature>
<accession>Q8SQU9</accession>
<dbReference type="EC" id="7.1.2.2" evidence="1"/>
<dbReference type="EMBL" id="AL590450">
    <property type="protein sequence ID" value="CAD26038.1"/>
    <property type="molecule type" value="Genomic_DNA"/>
</dbReference>
<dbReference type="RefSeq" id="NP_586434.1">
    <property type="nucleotide sequence ID" value="NM_001042267.1"/>
</dbReference>
<dbReference type="SMR" id="Q8SQU9"/>
<dbReference type="FunCoup" id="Q8SQU9">
    <property type="interactions" value="125"/>
</dbReference>
<dbReference type="STRING" id="284813.Q8SQU9"/>
<dbReference type="GeneID" id="860088"/>
<dbReference type="KEGG" id="ecu:ECU11_1280i"/>
<dbReference type="VEuPathDB" id="MicrosporidiaDB:ECU11_1280i"/>
<dbReference type="HOGENOM" id="CLU_008162_3_1_1"/>
<dbReference type="InParanoid" id="Q8SQU9"/>
<dbReference type="OMA" id="RIVKTFW"/>
<dbReference type="OrthoDB" id="1676488at2759"/>
<dbReference type="Proteomes" id="UP000000819">
    <property type="component" value="Chromosome XI"/>
</dbReference>
<dbReference type="GO" id="GO:0000221">
    <property type="term" value="C:vacuolar proton-transporting V-type ATPase, V1 domain"/>
    <property type="evidence" value="ECO:0000250"/>
    <property type="project" value="UniProtKB"/>
</dbReference>
<dbReference type="GO" id="GO:0005524">
    <property type="term" value="F:ATP binding"/>
    <property type="evidence" value="ECO:0007669"/>
    <property type="project" value="UniProtKB-KW"/>
</dbReference>
<dbReference type="GO" id="GO:0016887">
    <property type="term" value="F:ATP hydrolysis activity"/>
    <property type="evidence" value="ECO:0007669"/>
    <property type="project" value="InterPro"/>
</dbReference>
<dbReference type="GO" id="GO:0046961">
    <property type="term" value="F:proton-transporting ATPase activity, rotational mechanism"/>
    <property type="evidence" value="ECO:0007669"/>
    <property type="project" value="InterPro"/>
</dbReference>
<dbReference type="GO" id="GO:0046034">
    <property type="term" value="P:ATP metabolic process"/>
    <property type="evidence" value="ECO:0007669"/>
    <property type="project" value="InterPro"/>
</dbReference>
<dbReference type="CDD" id="cd18111">
    <property type="entry name" value="ATP-synt_V_A-type_alpha_C"/>
    <property type="match status" value="1"/>
</dbReference>
<dbReference type="CDD" id="cd18119">
    <property type="entry name" value="ATP-synt_V_A-type_alpha_N"/>
    <property type="match status" value="1"/>
</dbReference>
<dbReference type="CDD" id="cd01134">
    <property type="entry name" value="V_A-ATPase_A"/>
    <property type="match status" value="1"/>
</dbReference>
<dbReference type="FunFam" id="1.10.1140.10:FF:000002">
    <property type="entry name" value="V-type proton ATPase catalytic subunit A"/>
    <property type="match status" value="1"/>
</dbReference>
<dbReference type="FunFam" id="2.40.30.20:FF:000002">
    <property type="entry name" value="V-type proton ATPase catalytic subunit A"/>
    <property type="match status" value="1"/>
</dbReference>
<dbReference type="FunFam" id="2.40.50.100:FF:000008">
    <property type="entry name" value="V-type proton ATPase catalytic subunit A"/>
    <property type="match status" value="1"/>
</dbReference>
<dbReference type="FunFam" id="3.40.50.300:FF:000052">
    <property type="entry name" value="V-type proton ATPase catalytic subunit A"/>
    <property type="match status" value="1"/>
</dbReference>
<dbReference type="Gene3D" id="2.40.30.20">
    <property type="match status" value="1"/>
</dbReference>
<dbReference type="Gene3D" id="2.40.50.100">
    <property type="match status" value="1"/>
</dbReference>
<dbReference type="Gene3D" id="1.10.1140.10">
    <property type="entry name" value="Bovine Mitochondrial F1-atpase, Atp Synthase Beta Chain, Chain D, domain 3"/>
    <property type="match status" value="1"/>
</dbReference>
<dbReference type="Gene3D" id="3.40.50.300">
    <property type="entry name" value="P-loop containing nucleotide triphosphate hydrolases"/>
    <property type="match status" value="1"/>
</dbReference>
<dbReference type="HAMAP" id="MF_00309">
    <property type="entry name" value="ATP_synth_A_arch"/>
    <property type="match status" value="1"/>
</dbReference>
<dbReference type="InterPro" id="IPR055190">
    <property type="entry name" value="ATP-synt_VA_C"/>
</dbReference>
<dbReference type="InterPro" id="IPR031686">
    <property type="entry name" value="ATP-synth_a_Xtn"/>
</dbReference>
<dbReference type="InterPro" id="IPR023366">
    <property type="entry name" value="ATP_synth_asu-like_sf"/>
</dbReference>
<dbReference type="InterPro" id="IPR020003">
    <property type="entry name" value="ATPase_a/bsu_AS"/>
</dbReference>
<dbReference type="InterPro" id="IPR004100">
    <property type="entry name" value="ATPase_F1/V1/A1_a/bsu_N"/>
</dbReference>
<dbReference type="InterPro" id="IPR036121">
    <property type="entry name" value="ATPase_F1/V1/A1_a/bsu_N_sf"/>
</dbReference>
<dbReference type="InterPro" id="IPR000194">
    <property type="entry name" value="ATPase_F1/V1/A1_a/bsu_nucl-bd"/>
</dbReference>
<dbReference type="InterPro" id="IPR024034">
    <property type="entry name" value="ATPase_F1/V1_b/a_C"/>
</dbReference>
<dbReference type="InterPro" id="IPR005725">
    <property type="entry name" value="ATPase_V1-cplx_asu"/>
</dbReference>
<dbReference type="InterPro" id="IPR027417">
    <property type="entry name" value="P-loop_NTPase"/>
</dbReference>
<dbReference type="InterPro" id="IPR022878">
    <property type="entry name" value="V-ATPase_asu"/>
</dbReference>
<dbReference type="NCBIfam" id="NF003220">
    <property type="entry name" value="PRK04192.1"/>
    <property type="match status" value="1"/>
</dbReference>
<dbReference type="NCBIfam" id="TIGR01042">
    <property type="entry name" value="V-ATPase_V1_A"/>
    <property type="match status" value="1"/>
</dbReference>
<dbReference type="PANTHER" id="PTHR43607:SF1">
    <property type="entry name" value="H(+)-TRANSPORTING TWO-SECTOR ATPASE"/>
    <property type="match status" value="1"/>
</dbReference>
<dbReference type="PANTHER" id="PTHR43607">
    <property type="entry name" value="V-TYPE PROTON ATPASE CATALYTIC SUBUNIT A"/>
    <property type="match status" value="1"/>
</dbReference>
<dbReference type="Pfam" id="PF00006">
    <property type="entry name" value="ATP-synt_ab"/>
    <property type="match status" value="1"/>
</dbReference>
<dbReference type="Pfam" id="PF02874">
    <property type="entry name" value="ATP-synt_ab_N"/>
    <property type="match status" value="1"/>
</dbReference>
<dbReference type="Pfam" id="PF16886">
    <property type="entry name" value="ATP-synt_ab_Xtn"/>
    <property type="match status" value="1"/>
</dbReference>
<dbReference type="Pfam" id="PF22919">
    <property type="entry name" value="ATP-synt_VA_C"/>
    <property type="match status" value="1"/>
</dbReference>
<dbReference type="SUPFAM" id="SSF47917">
    <property type="entry name" value="C-terminal domain of alpha and beta subunits of F1 ATP synthase"/>
    <property type="match status" value="1"/>
</dbReference>
<dbReference type="SUPFAM" id="SSF50615">
    <property type="entry name" value="N-terminal domain of alpha and beta subunits of F1 ATP synthase"/>
    <property type="match status" value="1"/>
</dbReference>
<dbReference type="SUPFAM" id="SSF52540">
    <property type="entry name" value="P-loop containing nucleoside triphosphate hydrolases"/>
    <property type="match status" value="1"/>
</dbReference>
<dbReference type="PROSITE" id="PS00152">
    <property type="entry name" value="ATPASE_ALPHA_BETA"/>
    <property type="match status" value="1"/>
</dbReference>
<sequence length="607" mass="67306">MNVVQQTFAELSIGEPEKRVEGRVYSVSGPVVVGCNMIGCAMYELVKVGSEGLAGEIIKIDKDQATIQVYEDTSGLCVGDTIVRTGLPLCAELGPGLFESIYDGIQRPLREIRESSGGIFIPKGVNIPALDREREYEFVPAVSAGDYVVGGDVFGKVYENSLIETKILVPPKKSGKVAFIACRGNYTLKDVVMELETGKGKEEMFMYHTWPVRIPRPIEEKKNATHPLFTGQRILDSLFPCVQGGTTAIPGAFGCGKTVISQSLSKYSNSDAIVYVGCGERGNEMSEVLMEFPKLTVGGKDDSIMKRTVLVANTSNMPVAAREASIYTGITISEYLRDQGMNVSMMADSTSRWAEALREISGRLAEMPADSGYPAYLGAKLAFFYERAGSVVCLGSPRRTGSVTIVGAVSPPGGDFSDPVTSATLGIVQVFWGLDKKLAQRKHFPSINWNLSYSKYFSNLEPYYEEVDPGFIVNRTKCREILQLDDDLSEIVQLVGKNALSETEKLILDISKLIKEDFLQQNGYSRYDNYCPFTKTRLMLRNIILYFDNSKNAITNYKLSWSTIRKETEDVFYGLMKMKFVMADKEMEPKLNKLKREIEGVFLKMLG</sequence>